<reference key="1">
    <citation type="submission" date="2002-12" db="EMBL/GenBank/DDBJ databases">
        <title>Complete genome sequence of Vibrio vulnificus CMCP6.</title>
        <authorList>
            <person name="Rhee J.H."/>
            <person name="Kim S.Y."/>
            <person name="Chung S.S."/>
            <person name="Kim J.J."/>
            <person name="Moon Y.H."/>
            <person name="Jeong H."/>
            <person name="Choy H.E."/>
        </authorList>
    </citation>
    <scope>NUCLEOTIDE SEQUENCE [LARGE SCALE GENOMIC DNA]</scope>
    <source>
        <strain>CMCP6</strain>
    </source>
</reference>
<proteinExistence type="inferred from homology"/>
<gene>
    <name evidence="1" type="primary">rnc</name>
    <name type="ordered locus">VV1_1565</name>
</gene>
<sequence>MNSPIEKLTRQLGYQFQDDELLNLALTHRSANSKHNERLEFLGDSILSFVIADELYHRFPKVNEGDMSRMRATLVRGNTLAELGREFGLGDYLKLGPGELKSGGFRRDSILADAVEAIIGAVYLDSDLEVVRGIVLNWYTSRLEAIKPGVSQKDPKTRLQEFLQGRRKPLPVYTVTNIKGEAHNQEFTVECDIAGMDKPVVGRGTSRRKAEQAAAELALEQLTNG</sequence>
<organism>
    <name type="scientific">Vibrio vulnificus (strain CMCP6)</name>
    <dbReference type="NCBI Taxonomy" id="216895"/>
    <lineage>
        <taxon>Bacteria</taxon>
        <taxon>Pseudomonadati</taxon>
        <taxon>Pseudomonadota</taxon>
        <taxon>Gammaproteobacteria</taxon>
        <taxon>Vibrionales</taxon>
        <taxon>Vibrionaceae</taxon>
        <taxon>Vibrio</taxon>
    </lineage>
</organism>
<name>RNC_VIBVU</name>
<dbReference type="EC" id="3.1.26.3" evidence="1"/>
<dbReference type="EMBL" id="AE016795">
    <property type="protein sequence ID" value="AAO09989.1"/>
    <property type="molecule type" value="Genomic_DNA"/>
</dbReference>
<dbReference type="RefSeq" id="WP_011079500.1">
    <property type="nucleotide sequence ID" value="NC_004459.3"/>
</dbReference>
<dbReference type="SMR" id="Q8DC76"/>
<dbReference type="GeneID" id="93895822"/>
<dbReference type="KEGG" id="vvu:VV1_1565"/>
<dbReference type="HOGENOM" id="CLU_000907_1_1_6"/>
<dbReference type="Proteomes" id="UP000002275">
    <property type="component" value="Chromosome 1"/>
</dbReference>
<dbReference type="GO" id="GO:0005737">
    <property type="term" value="C:cytoplasm"/>
    <property type="evidence" value="ECO:0007669"/>
    <property type="project" value="UniProtKB-SubCell"/>
</dbReference>
<dbReference type="GO" id="GO:0003725">
    <property type="term" value="F:double-stranded RNA binding"/>
    <property type="evidence" value="ECO:0007669"/>
    <property type="project" value="TreeGrafter"/>
</dbReference>
<dbReference type="GO" id="GO:0046872">
    <property type="term" value="F:metal ion binding"/>
    <property type="evidence" value="ECO:0007669"/>
    <property type="project" value="UniProtKB-KW"/>
</dbReference>
<dbReference type="GO" id="GO:0004525">
    <property type="term" value="F:ribonuclease III activity"/>
    <property type="evidence" value="ECO:0007669"/>
    <property type="project" value="UniProtKB-UniRule"/>
</dbReference>
<dbReference type="GO" id="GO:0019843">
    <property type="term" value="F:rRNA binding"/>
    <property type="evidence" value="ECO:0007669"/>
    <property type="project" value="UniProtKB-KW"/>
</dbReference>
<dbReference type="GO" id="GO:0006397">
    <property type="term" value="P:mRNA processing"/>
    <property type="evidence" value="ECO:0007669"/>
    <property type="project" value="UniProtKB-UniRule"/>
</dbReference>
<dbReference type="GO" id="GO:0010468">
    <property type="term" value="P:regulation of gene expression"/>
    <property type="evidence" value="ECO:0007669"/>
    <property type="project" value="TreeGrafter"/>
</dbReference>
<dbReference type="GO" id="GO:0006364">
    <property type="term" value="P:rRNA processing"/>
    <property type="evidence" value="ECO:0007669"/>
    <property type="project" value="UniProtKB-UniRule"/>
</dbReference>
<dbReference type="GO" id="GO:0008033">
    <property type="term" value="P:tRNA processing"/>
    <property type="evidence" value="ECO:0007669"/>
    <property type="project" value="UniProtKB-KW"/>
</dbReference>
<dbReference type="CDD" id="cd10845">
    <property type="entry name" value="DSRM_RNAse_III_family"/>
    <property type="match status" value="1"/>
</dbReference>
<dbReference type="CDD" id="cd00593">
    <property type="entry name" value="RIBOc"/>
    <property type="match status" value="1"/>
</dbReference>
<dbReference type="FunFam" id="1.10.1520.10:FF:000001">
    <property type="entry name" value="Ribonuclease 3"/>
    <property type="match status" value="1"/>
</dbReference>
<dbReference type="FunFam" id="3.30.160.20:FF:000003">
    <property type="entry name" value="Ribonuclease 3"/>
    <property type="match status" value="1"/>
</dbReference>
<dbReference type="Gene3D" id="3.30.160.20">
    <property type="match status" value="1"/>
</dbReference>
<dbReference type="Gene3D" id="1.10.1520.10">
    <property type="entry name" value="Ribonuclease III domain"/>
    <property type="match status" value="1"/>
</dbReference>
<dbReference type="HAMAP" id="MF_00104">
    <property type="entry name" value="RNase_III"/>
    <property type="match status" value="1"/>
</dbReference>
<dbReference type="InterPro" id="IPR014720">
    <property type="entry name" value="dsRBD_dom"/>
</dbReference>
<dbReference type="InterPro" id="IPR011907">
    <property type="entry name" value="RNase_III"/>
</dbReference>
<dbReference type="InterPro" id="IPR000999">
    <property type="entry name" value="RNase_III_dom"/>
</dbReference>
<dbReference type="InterPro" id="IPR036389">
    <property type="entry name" value="RNase_III_sf"/>
</dbReference>
<dbReference type="NCBIfam" id="TIGR02191">
    <property type="entry name" value="RNaseIII"/>
    <property type="match status" value="1"/>
</dbReference>
<dbReference type="PANTHER" id="PTHR11207:SF0">
    <property type="entry name" value="RIBONUCLEASE 3"/>
    <property type="match status" value="1"/>
</dbReference>
<dbReference type="PANTHER" id="PTHR11207">
    <property type="entry name" value="RIBONUCLEASE III"/>
    <property type="match status" value="1"/>
</dbReference>
<dbReference type="Pfam" id="PF00035">
    <property type="entry name" value="dsrm"/>
    <property type="match status" value="1"/>
</dbReference>
<dbReference type="Pfam" id="PF14622">
    <property type="entry name" value="Ribonucleas_3_3"/>
    <property type="match status" value="1"/>
</dbReference>
<dbReference type="SMART" id="SM00358">
    <property type="entry name" value="DSRM"/>
    <property type="match status" value="1"/>
</dbReference>
<dbReference type="SMART" id="SM00535">
    <property type="entry name" value="RIBOc"/>
    <property type="match status" value="1"/>
</dbReference>
<dbReference type="SUPFAM" id="SSF54768">
    <property type="entry name" value="dsRNA-binding domain-like"/>
    <property type="match status" value="1"/>
</dbReference>
<dbReference type="SUPFAM" id="SSF69065">
    <property type="entry name" value="RNase III domain-like"/>
    <property type="match status" value="1"/>
</dbReference>
<dbReference type="PROSITE" id="PS50137">
    <property type="entry name" value="DS_RBD"/>
    <property type="match status" value="1"/>
</dbReference>
<dbReference type="PROSITE" id="PS00517">
    <property type="entry name" value="RNASE_3_1"/>
    <property type="match status" value="1"/>
</dbReference>
<dbReference type="PROSITE" id="PS50142">
    <property type="entry name" value="RNASE_3_2"/>
    <property type="match status" value="1"/>
</dbReference>
<comment type="function">
    <text evidence="1">Digests double-stranded RNA. Involved in the processing of primary rRNA transcript to yield the immediate precursors to the large and small rRNAs (23S and 16S). Processes some mRNAs, and tRNAs when they are encoded in the rRNA operon. Processes pre-crRNA and tracrRNA of type II CRISPR loci if present in the organism.</text>
</comment>
<comment type="catalytic activity">
    <reaction evidence="1">
        <text>Endonucleolytic cleavage to 5'-phosphomonoester.</text>
        <dbReference type="EC" id="3.1.26.3"/>
    </reaction>
</comment>
<comment type="cofactor">
    <cofactor evidence="1">
        <name>Mg(2+)</name>
        <dbReference type="ChEBI" id="CHEBI:18420"/>
    </cofactor>
</comment>
<comment type="subunit">
    <text evidence="1">Homodimer.</text>
</comment>
<comment type="subcellular location">
    <subcellularLocation>
        <location evidence="1">Cytoplasm</location>
    </subcellularLocation>
</comment>
<comment type="similarity">
    <text evidence="1">Belongs to the ribonuclease III family.</text>
</comment>
<evidence type="ECO:0000255" key="1">
    <source>
        <dbReference type="HAMAP-Rule" id="MF_00104"/>
    </source>
</evidence>
<feature type="chain" id="PRO_0000180454" description="Ribonuclease 3">
    <location>
        <begin position="1"/>
        <end position="225"/>
    </location>
</feature>
<feature type="domain" description="RNase III" evidence="1">
    <location>
        <begin position="5"/>
        <end position="127"/>
    </location>
</feature>
<feature type="domain" description="DRBM" evidence="1">
    <location>
        <begin position="154"/>
        <end position="224"/>
    </location>
</feature>
<feature type="active site" evidence="1">
    <location>
        <position position="44"/>
    </location>
</feature>
<feature type="active site" evidence="1">
    <location>
        <position position="116"/>
    </location>
</feature>
<feature type="binding site" evidence="1">
    <location>
        <position position="40"/>
    </location>
    <ligand>
        <name>Mg(2+)</name>
        <dbReference type="ChEBI" id="CHEBI:18420"/>
    </ligand>
</feature>
<feature type="binding site" evidence="1">
    <location>
        <position position="113"/>
    </location>
    <ligand>
        <name>Mg(2+)</name>
        <dbReference type="ChEBI" id="CHEBI:18420"/>
    </ligand>
</feature>
<feature type="binding site" evidence="1">
    <location>
        <position position="116"/>
    </location>
    <ligand>
        <name>Mg(2+)</name>
        <dbReference type="ChEBI" id="CHEBI:18420"/>
    </ligand>
</feature>
<protein>
    <recommendedName>
        <fullName evidence="1">Ribonuclease 3</fullName>
        <ecNumber evidence="1">3.1.26.3</ecNumber>
    </recommendedName>
    <alternativeName>
        <fullName evidence="1">Ribonuclease III</fullName>
        <shortName evidence="1">RNase III</shortName>
    </alternativeName>
</protein>
<keyword id="KW-0963">Cytoplasm</keyword>
<keyword id="KW-0255">Endonuclease</keyword>
<keyword id="KW-0378">Hydrolase</keyword>
<keyword id="KW-0460">Magnesium</keyword>
<keyword id="KW-0479">Metal-binding</keyword>
<keyword id="KW-0507">mRNA processing</keyword>
<keyword id="KW-0540">Nuclease</keyword>
<keyword id="KW-0694">RNA-binding</keyword>
<keyword id="KW-0698">rRNA processing</keyword>
<keyword id="KW-0699">rRNA-binding</keyword>
<keyword id="KW-0819">tRNA processing</keyword>
<accession>Q8DC76</accession>